<comment type="function">
    <text evidence="2 3 4">Required for hearing (PubMed:30380417). Plays a role in maintaining cochlear stereocilia bundles that are involved in sound detection (PubMed:15489334, PubMed:35752427). Ensures the restriction of TPRN to the basal region of stereocilia in hair cells (PubMed:30380417).</text>
</comment>
<comment type="subunit">
    <text evidence="3">Interacts with TPRN; the interaction restricts TPRN to the stereocilum basal region.</text>
</comment>
<comment type="subcellular location">
    <subcellularLocation>
        <location evidence="3 4 5">Cell projection</location>
        <location evidence="3 4 5">Stereocilium</location>
    </subcellularLocation>
    <text evidence="3">Concentrated at the basal taper region of stereocilia in early postnatal development (PubMed:30380417). In adult hair cells, concentrated at the basal region but also detected along the stereocilium shaft (PubMed:30380417).</text>
</comment>
<comment type="tissue specificity">
    <text evidence="5">Expressed in sensory hair cells in the cochlea and vestibular organ.</text>
</comment>
<comment type="disruption phenotype">
    <text evidence="4 5">Mice appear normal at postnatal week 2, but develop progressive hearing loss associated with early defects in orientation and organization of cochlear stereocilia bundles (Ref.3). They have normal vestibular function (Ref.3). Reducing Tprn expression corrects stereocilium morphological defects and partially restores hearing in Grxcr2 mutant mice (PubMed:35752427).</text>
</comment>
<comment type="similarity">
    <text evidence="6">Belongs to the GRXCR2 family.</text>
</comment>
<comment type="caution">
    <text evidence="6">Although it shares high sequence similarity with GRXCR1, it does not contain a canonical glutaredoxin domain.</text>
</comment>
<name>GRCR2_MOUSE</name>
<keyword id="KW-0966">Cell projection</keyword>
<keyword id="KW-1009">Hearing</keyword>
<keyword id="KW-1185">Reference proteome</keyword>
<reference key="1">
    <citation type="journal article" date="2005" name="Science">
        <title>The transcriptional landscape of the mammalian genome.</title>
        <authorList>
            <person name="Carninci P."/>
            <person name="Kasukawa T."/>
            <person name="Katayama S."/>
            <person name="Gough J."/>
            <person name="Frith M.C."/>
            <person name="Maeda N."/>
            <person name="Oyama R."/>
            <person name="Ravasi T."/>
            <person name="Lenhard B."/>
            <person name="Wells C."/>
            <person name="Kodzius R."/>
            <person name="Shimokawa K."/>
            <person name="Bajic V.B."/>
            <person name="Brenner S.E."/>
            <person name="Batalov S."/>
            <person name="Forrest A.R."/>
            <person name="Zavolan M."/>
            <person name="Davis M.J."/>
            <person name="Wilming L.G."/>
            <person name="Aidinis V."/>
            <person name="Allen J.E."/>
            <person name="Ambesi-Impiombato A."/>
            <person name="Apweiler R."/>
            <person name="Aturaliya R.N."/>
            <person name="Bailey T.L."/>
            <person name="Bansal M."/>
            <person name="Baxter L."/>
            <person name="Beisel K.W."/>
            <person name="Bersano T."/>
            <person name="Bono H."/>
            <person name="Chalk A.M."/>
            <person name="Chiu K.P."/>
            <person name="Choudhary V."/>
            <person name="Christoffels A."/>
            <person name="Clutterbuck D.R."/>
            <person name="Crowe M.L."/>
            <person name="Dalla E."/>
            <person name="Dalrymple B.P."/>
            <person name="de Bono B."/>
            <person name="Della Gatta G."/>
            <person name="di Bernardo D."/>
            <person name="Down T."/>
            <person name="Engstrom P."/>
            <person name="Fagiolini M."/>
            <person name="Faulkner G."/>
            <person name="Fletcher C.F."/>
            <person name="Fukushima T."/>
            <person name="Furuno M."/>
            <person name="Futaki S."/>
            <person name="Gariboldi M."/>
            <person name="Georgii-Hemming P."/>
            <person name="Gingeras T.R."/>
            <person name="Gojobori T."/>
            <person name="Green R.E."/>
            <person name="Gustincich S."/>
            <person name="Harbers M."/>
            <person name="Hayashi Y."/>
            <person name="Hensch T.K."/>
            <person name="Hirokawa N."/>
            <person name="Hill D."/>
            <person name="Huminiecki L."/>
            <person name="Iacono M."/>
            <person name="Ikeo K."/>
            <person name="Iwama A."/>
            <person name="Ishikawa T."/>
            <person name="Jakt M."/>
            <person name="Kanapin A."/>
            <person name="Katoh M."/>
            <person name="Kawasawa Y."/>
            <person name="Kelso J."/>
            <person name="Kitamura H."/>
            <person name="Kitano H."/>
            <person name="Kollias G."/>
            <person name="Krishnan S.P."/>
            <person name="Kruger A."/>
            <person name="Kummerfeld S.K."/>
            <person name="Kurochkin I.V."/>
            <person name="Lareau L.F."/>
            <person name="Lazarevic D."/>
            <person name="Lipovich L."/>
            <person name="Liu J."/>
            <person name="Liuni S."/>
            <person name="McWilliam S."/>
            <person name="Madan Babu M."/>
            <person name="Madera M."/>
            <person name="Marchionni L."/>
            <person name="Matsuda H."/>
            <person name="Matsuzawa S."/>
            <person name="Miki H."/>
            <person name="Mignone F."/>
            <person name="Miyake S."/>
            <person name="Morris K."/>
            <person name="Mottagui-Tabar S."/>
            <person name="Mulder N."/>
            <person name="Nakano N."/>
            <person name="Nakauchi H."/>
            <person name="Ng P."/>
            <person name="Nilsson R."/>
            <person name="Nishiguchi S."/>
            <person name="Nishikawa S."/>
            <person name="Nori F."/>
            <person name="Ohara O."/>
            <person name="Okazaki Y."/>
            <person name="Orlando V."/>
            <person name="Pang K.C."/>
            <person name="Pavan W.J."/>
            <person name="Pavesi G."/>
            <person name="Pesole G."/>
            <person name="Petrovsky N."/>
            <person name="Piazza S."/>
            <person name="Reed J."/>
            <person name="Reid J.F."/>
            <person name="Ring B.Z."/>
            <person name="Ringwald M."/>
            <person name="Rost B."/>
            <person name="Ruan Y."/>
            <person name="Salzberg S.L."/>
            <person name="Sandelin A."/>
            <person name="Schneider C."/>
            <person name="Schoenbach C."/>
            <person name="Sekiguchi K."/>
            <person name="Semple C.A."/>
            <person name="Seno S."/>
            <person name="Sessa L."/>
            <person name="Sheng Y."/>
            <person name="Shibata Y."/>
            <person name="Shimada H."/>
            <person name="Shimada K."/>
            <person name="Silva D."/>
            <person name="Sinclair B."/>
            <person name="Sperling S."/>
            <person name="Stupka E."/>
            <person name="Sugiura K."/>
            <person name="Sultana R."/>
            <person name="Takenaka Y."/>
            <person name="Taki K."/>
            <person name="Tammoja K."/>
            <person name="Tan S.L."/>
            <person name="Tang S."/>
            <person name="Taylor M.S."/>
            <person name="Tegner J."/>
            <person name="Teichmann S.A."/>
            <person name="Ueda H.R."/>
            <person name="van Nimwegen E."/>
            <person name="Verardo R."/>
            <person name="Wei C.L."/>
            <person name="Yagi K."/>
            <person name="Yamanishi H."/>
            <person name="Zabarovsky E."/>
            <person name="Zhu S."/>
            <person name="Zimmer A."/>
            <person name="Hide W."/>
            <person name="Bult C."/>
            <person name="Grimmond S.M."/>
            <person name="Teasdale R.D."/>
            <person name="Liu E.T."/>
            <person name="Brusic V."/>
            <person name="Quackenbush J."/>
            <person name="Wahlestedt C."/>
            <person name="Mattick J.S."/>
            <person name="Hume D.A."/>
            <person name="Kai C."/>
            <person name="Sasaki D."/>
            <person name="Tomaru Y."/>
            <person name="Fukuda S."/>
            <person name="Kanamori-Katayama M."/>
            <person name="Suzuki M."/>
            <person name="Aoki J."/>
            <person name="Arakawa T."/>
            <person name="Iida J."/>
            <person name="Imamura K."/>
            <person name="Itoh M."/>
            <person name="Kato T."/>
            <person name="Kawaji H."/>
            <person name="Kawagashira N."/>
            <person name="Kawashima T."/>
            <person name="Kojima M."/>
            <person name="Kondo S."/>
            <person name="Konno H."/>
            <person name="Nakano K."/>
            <person name="Ninomiya N."/>
            <person name="Nishio T."/>
            <person name="Okada M."/>
            <person name="Plessy C."/>
            <person name="Shibata K."/>
            <person name="Shiraki T."/>
            <person name="Suzuki S."/>
            <person name="Tagami M."/>
            <person name="Waki K."/>
            <person name="Watahiki A."/>
            <person name="Okamura-Oho Y."/>
            <person name="Suzuki H."/>
            <person name="Kawai J."/>
            <person name="Hayashizaki Y."/>
        </authorList>
    </citation>
    <scope>NUCLEOTIDE SEQUENCE [LARGE SCALE MRNA]</scope>
    <source>
        <strain>C57BL/6J</strain>
        <tissue>Inner ear</tissue>
    </source>
</reference>
<reference key="2">
    <citation type="journal article" date="2004" name="Genome Res.">
        <title>The status, quality, and expansion of the NIH full-length cDNA project: the Mammalian Gene Collection (MGC).</title>
        <authorList>
            <consortium name="The MGC Project Team"/>
        </authorList>
    </citation>
    <scope>NUCLEOTIDE SEQUENCE [LARGE SCALE MRNA]</scope>
    <source>
        <tissue>Brain</tissue>
    </source>
</reference>
<reference key="3">
    <citation type="thesis" date="2012" institute="Univ. of Michigan" country="United States">
        <title>The glutaredoxin-like cysteine-rich family of genes, Grxcr1 and Grxcr2, in stereocilia development and function.</title>
        <authorList>
            <person name="Avenarius M.R."/>
        </authorList>
    </citation>
    <scope>SUBCELLULAR LOCATION</scope>
    <scope>TISSUE SPECIFICITY</scope>
    <scope>DISRUPTION PHENOTYPE</scope>
</reference>
<reference key="4">
    <citation type="journal article" date="2018" name="Cell Rep.">
        <title>GRXCR2 Regulates Taperin Localization Critical for Stereocilia Morphology and Hearing.</title>
        <authorList>
            <person name="Liu C."/>
            <person name="Luo N."/>
            <person name="Tung C.Y."/>
            <person name="Perrin B.J."/>
            <person name="Zhao B."/>
        </authorList>
    </citation>
    <scope>FUNCTION</scope>
    <scope>INTERACTION WITH TPRN</scope>
    <scope>SUBCELLULAR LOCATION</scope>
</reference>
<reference key="5">
    <citation type="journal article" date="2022" name="Neuroscience">
        <title>Reducing Taperin Expression Restores Hearing in Grxcr2 Mutant Mice.</title>
        <authorList>
            <person name="Liu C."/>
            <person name="Luo N."/>
            <person name="Zhao B."/>
        </authorList>
    </citation>
    <scope>FUNCTION</scope>
    <scope>SUBCELLULAR LOCATION</scope>
    <scope>DISRUPTION PHENOTYPE</scope>
</reference>
<feature type="chain" id="PRO_0000349192" description="Glutaredoxin domain-containing cysteine-rich protein 2">
    <location>
        <begin position="1"/>
        <end position="254"/>
    </location>
</feature>
<feature type="region of interest" description="Disordered" evidence="1">
    <location>
        <begin position="1"/>
        <end position="20"/>
    </location>
</feature>
<feature type="region of interest" description="Disordered" evidence="1">
    <location>
        <begin position="161"/>
        <end position="183"/>
    </location>
</feature>
<feature type="compositionally biased region" description="Basic and acidic residues" evidence="1">
    <location>
        <begin position="1"/>
        <end position="16"/>
    </location>
</feature>
<organism>
    <name type="scientific">Mus musculus</name>
    <name type="common">Mouse</name>
    <dbReference type="NCBI Taxonomy" id="10090"/>
    <lineage>
        <taxon>Eukaryota</taxon>
        <taxon>Metazoa</taxon>
        <taxon>Chordata</taxon>
        <taxon>Craniata</taxon>
        <taxon>Vertebrata</taxon>
        <taxon>Euteleostomi</taxon>
        <taxon>Mammalia</taxon>
        <taxon>Eutheria</taxon>
        <taxon>Euarchontoglires</taxon>
        <taxon>Glires</taxon>
        <taxon>Rodentia</taxon>
        <taxon>Myomorpha</taxon>
        <taxon>Muroidea</taxon>
        <taxon>Muridae</taxon>
        <taxon>Murinae</taxon>
        <taxon>Mus</taxon>
        <taxon>Mus</taxon>
    </lineage>
</organism>
<sequence>MEDSEKKLNQKSDDKPRKVRFKISSSYSGRVLKQVFEDGQELESPKEEYPHSFLQEALEPMDGVYGSGEVPKPQPYSPKLTAQRISVFRDSGAYTLAGSQPLFNDYKANDHKPPPIIDFGKIIIYTNNLKIIRTPMDKRDFMRKILQKEDVAEEASLMITGENDGDREQGCPLPERNGSPLPESERTFLHSQHTQDGLVPEDCLHCQGSGIATCSLCHGSKFSMLANRFKESYRALRCPACNENGLQPCRICSP</sequence>
<protein>
    <recommendedName>
        <fullName>Glutaredoxin domain-containing cysteine-rich protein 2</fullName>
    </recommendedName>
    <alternativeName>
        <fullName>GRXCR1-like protein</fullName>
    </alternativeName>
    <alternativeName>
        <fullName>Glutaredoxin domain-containing cysteine-rich protein 1-like protein</fullName>
    </alternativeName>
</protein>
<evidence type="ECO:0000256" key="1">
    <source>
        <dbReference type="SAM" id="MobiDB-lite"/>
    </source>
</evidence>
<evidence type="ECO:0000269" key="2">
    <source>
    </source>
</evidence>
<evidence type="ECO:0000269" key="3">
    <source>
    </source>
</evidence>
<evidence type="ECO:0000269" key="4">
    <source>
    </source>
</evidence>
<evidence type="ECO:0000269" key="5">
    <source ref="3"/>
</evidence>
<evidence type="ECO:0000305" key="6"/>
<dbReference type="EMBL" id="AK158418">
    <property type="protein sequence ID" value="BAE34497.1"/>
    <property type="molecule type" value="mRNA"/>
</dbReference>
<dbReference type="EMBL" id="AK158432">
    <property type="protein sequence ID" value="BAE34507.1"/>
    <property type="molecule type" value="mRNA"/>
</dbReference>
<dbReference type="EMBL" id="BC147102">
    <property type="protein sequence ID" value="AAI47103.1"/>
    <property type="molecule type" value="mRNA"/>
</dbReference>
<dbReference type="EMBL" id="BC147103">
    <property type="protein sequence ID" value="AAI47104.1"/>
    <property type="molecule type" value="mRNA"/>
</dbReference>
<dbReference type="CCDS" id="CCDS29209.1"/>
<dbReference type="RefSeq" id="NP_001028598.1">
    <property type="nucleotide sequence ID" value="NM_001033426.3"/>
</dbReference>
<dbReference type="SMR" id="Q3TYR5"/>
<dbReference type="FunCoup" id="Q3TYR5">
    <property type="interactions" value="11"/>
</dbReference>
<dbReference type="STRING" id="10090.ENSMUSP00000095198"/>
<dbReference type="PhosphoSitePlus" id="Q3TYR5"/>
<dbReference type="PaxDb" id="10090-ENSMUSP00000095198"/>
<dbReference type="Antibodypedia" id="71010">
    <property type="antibodies" value="14 antibodies from 7 providers"/>
</dbReference>
<dbReference type="Ensembl" id="ENSMUST00000097591.5">
    <property type="protein sequence ID" value="ENSMUSP00000095198.4"/>
    <property type="gene ID" value="ENSMUSG00000073574.5"/>
</dbReference>
<dbReference type="GeneID" id="332309"/>
<dbReference type="KEGG" id="mmu:332309"/>
<dbReference type="UCSC" id="uc008etj.1">
    <property type="organism name" value="mouse"/>
</dbReference>
<dbReference type="AGR" id="MGI:2685697"/>
<dbReference type="CTD" id="643226"/>
<dbReference type="MGI" id="MGI:2685697">
    <property type="gene designation" value="Grxcr2"/>
</dbReference>
<dbReference type="VEuPathDB" id="HostDB:ENSMUSG00000073574"/>
<dbReference type="eggNOG" id="KOG2824">
    <property type="taxonomic scope" value="Eukaryota"/>
</dbReference>
<dbReference type="GeneTree" id="ENSGT00940000158849"/>
<dbReference type="HOGENOM" id="CLU_067117_0_0_1"/>
<dbReference type="InParanoid" id="Q3TYR5"/>
<dbReference type="OMA" id="PFFNDYK"/>
<dbReference type="OrthoDB" id="423313at2759"/>
<dbReference type="PhylomeDB" id="Q3TYR5"/>
<dbReference type="TreeFam" id="TF315372"/>
<dbReference type="BioGRID-ORCS" id="332309">
    <property type="hits" value="4 hits in 78 CRISPR screens"/>
</dbReference>
<dbReference type="PRO" id="PR:Q3TYR5"/>
<dbReference type="Proteomes" id="UP000000589">
    <property type="component" value="Chromosome 18"/>
</dbReference>
<dbReference type="RNAct" id="Q3TYR5">
    <property type="molecule type" value="protein"/>
</dbReference>
<dbReference type="Bgee" id="ENSMUSG00000073574">
    <property type="expression patterns" value="Expressed in blastoderm cell in morula and 1 other cell type or tissue"/>
</dbReference>
<dbReference type="GO" id="GO:0005829">
    <property type="term" value="C:cytosol"/>
    <property type="evidence" value="ECO:0000304"/>
    <property type="project" value="Reactome"/>
</dbReference>
<dbReference type="GO" id="GO:0005902">
    <property type="term" value="C:microvillus"/>
    <property type="evidence" value="ECO:0000314"/>
    <property type="project" value="MGI"/>
</dbReference>
<dbReference type="GO" id="GO:0120044">
    <property type="term" value="C:stereocilium base"/>
    <property type="evidence" value="ECO:0000314"/>
    <property type="project" value="MGI"/>
</dbReference>
<dbReference type="GO" id="GO:0120043">
    <property type="term" value="C:stereocilium shaft"/>
    <property type="evidence" value="ECO:0000314"/>
    <property type="project" value="MGI"/>
</dbReference>
<dbReference type="GO" id="GO:0060088">
    <property type="term" value="P:auditory receptor cell stereocilium organization"/>
    <property type="evidence" value="ECO:0000315"/>
    <property type="project" value="MGI"/>
</dbReference>
<dbReference type="GO" id="GO:0060122">
    <property type="term" value="P:inner ear receptor cell stereocilium organization"/>
    <property type="evidence" value="ECO:0000315"/>
    <property type="project" value="MGI"/>
</dbReference>
<dbReference type="GO" id="GO:0033365">
    <property type="term" value="P:protein localization to organelle"/>
    <property type="evidence" value="ECO:0000315"/>
    <property type="project" value="MGI"/>
</dbReference>
<dbReference type="GO" id="GO:0007605">
    <property type="term" value="P:sensory perception of sound"/>
    <property type="evidence" value="ECO:0000315"/>
    <property type="project" value="MGI"/>
</dbReference>
<dbReference type="InterPro" id="IPR033023">
    <property type="entry name" value="GRXCR2"/>
</dbReference>
<dbReference type="InterPro" id="IPR036410">
    <property type="entry name" value="HSP_DnaJ_Cys-rich_dom_sf"/>
</dbReference>
<dbReference type="PANTHER" id="PTHR46926">
    <property type="entry name" value="GLUTAREDOXIN DOMAIN-CONTAINING CYSTEINE-RICH PROTEIN 2"/>
    <property type="match status" value="1"/>
</dbReference>
<dbReference type="PANTHER" id="PTHR46926:SF1">
    <property type="entry name" value="GLUTAREDOXIN DOMAIN-CONTAINING CYSTEINE-RICH PROTEIN 2"/>
    <property type="match status" value="1"/>
</dbReference>
<dbReference type="Pfam" id="PF23733">
    <property type="entry name" value="GRXCR1-2_C"/>
    <property type="match status" value="1"/>
</dbReference>
<dbReference type="SUPFAM" id="SSF57938">
    <property type="entry name" value="DnaJ/Hsp40 cysteine-rich domain"/>
    <property type="match status" value="1"/>
</dbReference>
<accession>Q3TYR5</accession>
<accession>Q3TYQ5</accession>
<proteinExistence type="evidence at protein level"/>
<gene>
    <name type="primary">Grxcr2</name>
    <name type="synonym">Gm851</name>
</gene>